<gene>
    <name type="ordered locus">PG_2202</name>
</gene>
<name>YQGF_PORGI</name>
<protein>
    <recommendedName>
        <fullName evidence="1">Putative pre-16S rRNA nuclease</fullName>
        <ecNumber evidence="1">3.1.-.-</ecNumber>
    </recommendedName>
</protein>
<organism>
    <name type="scientific">Porphyromonas gingivalis (strain ATCC BAA-308 / W83)</name>
    <dbReference type="NCBI Taxonomy" id="242619"/>
    <lineage>
        <taxon>Bacteria</taxon>
        <taxon>Pseudomonadati</taxon>
        <taxon>Bacteroidota</taxon>
        <taxon>Bacteroidia</taxon>
        <taxon>Bacteroidales</taxon>
        <taxon>Porphyromonadaceae</taxon>
        <taxon>Porphyromonas</taxon>
    </lineage>
</organism>
<feature type="chain" id="PRO_0000172113" description="Putative pre-16S rRNA nuclease">
    <location>
        <begin position="1"/>
        <end position="138"/>
    </location>
</feature>
<sequence>MGRILAIDYGRKRTGLAVTDPLKIIPGGLTTVPTHTLLDFLRDYVSREPVERFVLGLPRRMNYEESESMTYIRPFAVKLAQAFPSIPITYVDERFTSRMAQRTILEAGIGKMKRRDKALVDEVSAVIILQSYLDNPDR</sequence>
<reference key="1">
    <citation type="journal article" date="2003" name="J. Bacteriol.">
        <title>Complete genome sequence of the oral pathogenic bacterium Porphyromonas gingivalis strain W83.</title>
        <authorList>
            <person name="Nelson K.E."/>
            <person name="Fleischmann R.D."/>
            <person name="DeBoy R.T."/>
            <person name="Paulsen I.T."/>
            <person name="Fouts D.E."/>
            <person name="Eisen J.A."/>
            <person name="Daugherty S.C."/>
            <person name="Dodson R.J."/>
            <person name="Durkin A.S."/>
            <person name="Gwinn M.L."/>
            <person name="Haft D.H."/>
            <person name="Kolonay J.F."/>
            <person name="Nelson W.C."/>
            <person name="Mason T.M."/>
            <person name="Tallon L."/>
            <person name="Gray J."/>
            <person name="Granger D."/>
            <person name="Tettelin H."/>
            <person name="Dong H."/>
            <person name="Galvin J.L."/>
            <person name="Duncan M.J."/>
            <person name="Dewhirst F.E."/>
            <person name="Fraser C.M."/>
        </authorList>
    </citation>
    <scope>NUCLEOTIDE SEQUENCE [LARGE SCALE GENOMIC DNA]</scope>
    <source>
        <strain>ATCC BAA-308 / W83</strain>
    </source>
</reference>
<keyword id="KW-0963">Cytoplasm</keyword>
<keyword id="KW-0378">Hydrolase</keyword>
<keyword id="KW-0540">Nuclease</keyword>
<keyword id="KW-1185">Reference proteome</keyword>
<keyword id="KW-0690">Ribosome biogenesis</keyword>
<comment type="function">
    <text evidence="1">Could be a nuclease involved in processing of the 5'-end of pre-16S rRNA.</text>
</comment>
<comment type="subcellular location">
    <subcellularLocation>
        <location evidence="1">Cytoplasm</location>
    </subcellularLocation>
</comment>
<comment type="similarity">
    <text evidence="1">Belongs to the YqgF nuclease family.</text>
</comment>
<evidence type="ECO:0000255" key="1">
    <source>
        <dbReference type="HAMAP-Rule" id="MF_00651"/>
    </source>
</evidence>
<accession>Q7MT06</accession>
<dbReference type="EC" id="3.1.-.-" evidence="1"/>
<dbReference type="EMBL" id="AE015924">
    <property type="protein sequence ID" value="AAQ67144.1"/>
    <property type="molecule type" value="Genomic_DNA"/>
</dbReference>
<dbReference type="RefSeq" id="WP_010956521.1">
    <property type="nucleotide sequence ID" value="NC_002950.2"/>
</dbReference>
<dbReference type="SMR" id="Q7MT06"/>
<dbReference type="STRING" id="242619.PG_2202"/>
<dbReference type="EnsemblBacteria" id="AAQ67144">
    <property type="protein sequence ID" value="AAQ67144"/>
    <property type="gene ID" value="PG_2202"/>
</dbReference>
<dbReference type="GeneID" id="29257206"/>
<dbReference type="KEGG" id="pgi:PG_2202"/>
<dbReference type="eggNOG" id="COG0816">
    <property type="taxonomic scope" value="Bacteria"/>
</dbReference>
<dbReference type="HOGENOM" id="CLU_098240_2_1_10"/>
<dbReference type="Proteomes" id="UP000000588">
    <property type="component" value="Chromosome"/>
</dbReference>
<dbReference type="GO" id="GO:0005829">
    <property type="term" value="C:cytosol"/>
    <property type="evidence" value="ECO:0007669"/>
    <property type="project" value="TreeGrafter"/>
</dbReference>
<dbReference type="GO" id="GO:0004518">
    <property type="term" value="F:nuclease activity"/>
    <property type="evidence" value="ECO:0007669"/>
    <property type="project" value="UniProtKB-KW"/>
</dbReference>
<dbReference type="GO" id="GO:0000967">
    <property type="term" value="P:rRNA 5'-end processing"/>
    <property type="evidence" value="ECO:0007669"/>
    <property type="project" value="UniProtKB-UniRule"/>
</dbReference>
<dbReference type="CDD" id="cd16964">
    <property type="entry name" value="YqgF"/>
    <property type="match status" value="1"/>
</dbReference>
<dbReference type="Gene3D" id="3.30.420.140">
    <property type="entry name" value="YqgF/RNase H-like domain"/>
    <property type="match status" value="1"/>
</dbReference>
<dbReference type="HAMAP" id="MF_00651">
    <property type="entry name" value="Nuclease_YqgF"/>
    <property type="match status" value="1"/>
</dbReference>
<dbReference type="InterPro" id="IPR012337">
    <property type="entry name" value="RNaseH-like_sf"/>
</dbReference>
<dbReference type="InterPro" id="IPR005227">
    <property type="entry name" value="YqgF"/>
</dbReference>
<dbReference type="InterPro" id="IPR006641">
    <property type="entry name" value="YqgF/RNaseH-like_dom"/>
</dbReference>
<dbReference type="InterPro" id="IPR037027">
    <property type="entry name" value="YqgF/RNaseH-like_dom_sf"/>
</dbReference>
<dbReference type="NCBIfam" id="TIGR00250">
    <property type="entry name" value="RNAse_H_YqgF"/>
    <property type="match status" value="1"/>
</dbReference>
<dbReference type="PANTHER" id="PTHR33317">
    <property type="entry name" value="POLYNUCLEOTIDYL TRANSFERASE, RIBONUCLEASE H-LIKE SUPERFAMILY PROTEIN"/>
    <property type="match status" value="1"/>
</dbReference>
<dbReference type="PANTHER" id="PTHR33317:SF4">
    <property type="entry name" value="POLYNUCLEOTIDYL TRANSFERASE, RIBONUCLEASE H-LIKE SUPERFAMILY PROTEIN"/>
    <property type="match status" value="1"/>
</dbReference>
<dbReference type="Pfam" id="PF03652">
    <property type="entry name" value="RuvX"/>
    <property type="match status" value="1"/>
</dbReference>
<dbReference type="SMART" id="SM00732">
    <property type="entry name" value="YqgFc"/>
    <property type="match status" value="1"/>
</dbReference>
<dbReference type="SUPFAM" id="SSF53098">
    <property type="entry name" value="Ribonuclease H-like"/>
    <property type="match status" value="1"/>
</dbReference>
<proteinExistence type="inferred from homology"/>